<gene>
    <name type="primary">Marchf7</name>
    <name type="synonym">Axot</name>
    <name type="synonym">March7</name>
</gene>
<protein>
    <recommendedName>
        <fullName>E3 ubiquitin-protein ligase MARCHF7</fullName>
        <ecNumber>2.3.2.27</ecNumber>
    </recommendedName>
    <alternativeName>
        <fullName>Axotrophin</fullName>
    </alternativeName>
    <alternativeName>
        <fullName>Membrane-associated RING finger protein 7</fullName>
    </alternativeName>
    <alternativeName>
        <fullName>Membrane-associated RING-CH protein VII</fullName>
        <shortName>MARCH-VII</shortName>
    </alternativeName>
    <alternativeName>
        <fullName evidence="5">RING-type E3 ubiquitin transferase MARCHF7</fullName>
    </alternativeName>
</protein>
<evidence type="ECO:0000250" key="1">
    <source>
        <dbReference type="UniProtKB" id="Q9H992"/>
    </source>
</evidence>
<evidence type="ECO:0000255" key="2">
    <source>
        <dbReference type="PROSITE-ProRule" id="PRU00623"/>
    </source>
</evidence>
<evidence type="ECO:0000256" key="3">
    <source>
        <dbReference type="SAM" id="MobiDB-lite"/>
    </source>
</evidence>
<evidence type="ECO:0000269" key="4">
    <source>
    </source>
</evidence>
<evidence type="ECO:0000305" key="5"/>
<accession>Q9WV66</accession>
<feature type="chain" id="PRO_0000274416" description="E3 ubiquitin-protein ligase MARCHF7">
    <location>
        <begin position="1"/>
        <end position="693"/>
    </location>
</feature>
<feature type="zinc finger region" description="RING-CH-type" evidence="2">
    <location>
        <begin position="546"/>
        <end position="616"/>
    </location>
</feature>
<feature type="region of interest" description="Disordered" evidence="3">
    <location>
        <begin position="1"/>
        <end position="43"/>
    </location>
</feature>
<feature type="region of interest" description="Disordered" evidence="3">
    <location>
        <begin position="69"/>
        <end position="136"/>
    </location>
</feature>
<feature type="region of interest" description="Disordered" evidence="3">
    <location>
        <begin position="158"/>
        <end position="281"/>
    </location>
</feature>
<feature type="region of interest" description="Disordered" evidence="3">
    <location>
        <begin position="296"/>
        <end position="342"/>
    </location>
</feature>
<feature type="region of interest" description="Disordered" evidence="3">
    <location>
        <begin position="361"/>
        <end position="430"/>
    </location>
</feature>
<feature type="region of interest" description="Disordered" evidence="3">
    <location>
        <begin position="445"/>
        <end position="475"/>
    </location>
</feature>
<feature type="region of interest" description="Disordered" evidence="3">
    <location>
        <begin position="512"/>
        <end position="533"/>
    </location>
</feature>
<feature type="compositionally biased region" description="Polar residues" evidence="3">
    <location>
        <begin position="14"/>
        <end position="36"/>
    </location>
</feature>
<feature type="compositionally biased region" description="Polar residues" evidence="3">
    <location>
        <begin position="95"/>
        <end position="105"/>
    </location>
</feature>
<feature type="compositionally biased region" description="Polar residues" evidence="3">
    <location>
        <begin position="112"/>
        <end position="132"/>
    </location>
</feature>
<feature type="compositionally biased region" description="Polar residues" evidence="3">
    <location>
        <begin position="167"/>
        <end position="184"/>
    </location>
</feature>
<feature type="compositionally biased region" description="Polar residues" evidence="3">
    <location>
        <begin position="192"/>
        <end position="215"/>
    </location>
</feature>
<feature type="compositionally biased region" description="Low complexity" evidence="3">
    <location>
        <begin position="216"/>
        <end position="234"/>
    </location>
</feature>
<feature type="compositionally biased region" description="Polar residues" evidence="3">
    <location>
        <begin position="236"/>
        <end position="267"/>
    </location>
</feature>
<feature type="compositionally biased region" description="Basic and acidic residues" evidence="3">
    <location>
        <begin position="268"/>
        <end position="279"/>
    </location>
</feature>
<feature type="compositionally biased region" description="Low complexity" evidence="3">
    <location>
        <begin position="296"/>
        <end position="305"/>
    </location>
</feature>
<feature type="compositionally biased region" description="Polar residues" evidence="3">
    <location>
        <begin position="306"/>
        <end position="323"/>
    </location>
</feature>
<feature type="compositionally biased region" description="Low complexity" evidence="3">
    <location>
        <begin position="324"/>
        <end position="337"/>
    </location>
</feature>
<feature type="compositionally biased region" description="Low complexity" evidence="3">
    <location>
        <begin position="451"/>
        <end position="463"/>
    </location>
</feature>
<feature type="compositionally biased region" description="Basic and acidic residues" evidence="3">
    <location>
        <begin position="517"/>
        <end position="533"/>
    </location>
</feature>
<feature type="binding site" evidence="2">
    <location>
        <position position="554"/>
    </location>
    <ligand>
        <name>Zn(2+)</name>
        <dbReference type="ChEBI" id="CHEBI:29105"/>
        <label>1</label>
    </ligand>
</feature>
<feature type="binding site" evidence="2">
    <location>
        <position position="557"/>
    </location>
    <ligand>
        <name>Zn(2+)</name>
        <dbReference type="ChEBI" id="CHEBI:29105"/>
        <label>1</label>
    </ligand>
</feature>
<feature type="binding site" evidence="2">
    <location>
        <position position="572"/>
    </location>
    <ligand>
        <name>Zn(2+)</name>
        <dbReference type="ChEBI" id="CHEBI:29105"/>
        <label>2</label>
    </ligand>
</feature>
<feature type="binding site" evidence="2">
    <location>
        <position position="574"/>
    </location>
    <ligand>
        <name>Zn(2+)</name>
        <dbReference type="ChEBI" id="CHEBI:29105"/>
        <label>2</label>
    </ligand>
</feature>
<feature type="binding site" evidence="2">
    <location>
        <position position="582"/>
    </location>
    <ligand>
        <name>Zn(2+)</name>
        <dbReference type="ChEBI" id="CHEBI:29105"/>
        <label>1</label>
    </ligand>
</feature>
<feature type="binding site" evidence="2">
    <location>
        <position position="585"/>
    </location>
    <ligand>
        <name>Zn(2+)</name>
        <dbReference type="ChEBI" id="CHEBI:29105"/>
        <label>1</label>
    </ligand>
</feature>
<feature type="binding site" evidence="2">
    <location>
        <position position="606"/>
    </location>
    <ligand>
        <name>Zn(2+)</name>
        <dbReference type="ChEBI" id="CHEBI:29105"/>
        <label>2</label>
    </ligand>
</feature>
<feature type="binding site" evidence="2">
    <location>
        <position position="609"/>
    </location>
    <ligand>
        <name>Zn(2+)</name>
        <dbReference type="ChEBI" id="CHEBI:29105"/>
        <label>2</label>
    </ligand>
</feature>
<feature type="modified residue" description="N-acetylmethionine" evidence="1">
    <location>
        <position position="1"/>
    </location>
</feature>
<feature type="modified residue" description="Phosphoserine" evidence="1">
    <location>
        <position position="318"/>
    </location>
</feature>
<feature type="modified residue" description="Phosphoserine" evidence="1">
    <location>
        <position position="390"/>
    </location>
</feature>
<feature type="modified residue" description="Phosphothreonine" evidence="1">
    <location>
        <position position="688"/>
    </location>
</feature>
<feature type="modified residue" description="Phosphoserine" evidence="1">
    <location>
        <position position="689"/>
    </location>
</feature>
<reference key="1">
    <citation type="journal article" date="2005" name="FEBS Lett.">
        <title>Leukaemia inhibitory factor (LIF) is functionally linked to axotrophin and both LIF and axotrophin are linked to regulatory immune tolerance.</title>
        <authorList>
            <person name="Metcalfe S.M."/>
            <person name="Muthukumarana P.A.D.S."/>
            <person name="Thompson H.L."/>
            <person name="Haendel M.A."/>
            <person name="Lyons G.E."/>
        </authorList>
    </citation>
    <scope>NUCLEOTIDE SEQUENCE [MRNA]</scope>
    <scope>FUNCTION</scope>
    <scope>DEVELOPMENTAL STAGE</scope>
    <scope>TISSUE SPECIFICITY</scope>
    <scope>DISRUPTION PHENOTYPE</scope>
</reference>
<reference key="2">
    <citation type="journal article" date="2005" name="Science">
        <title>The transcriptional landscape of the mammalian genome.</title>
        <authorList>
            <person name="Carninci P."/>
            <person name="Kasukawa T."/>
            <person name="Katayama S."/>
            <person name="Gough J."/>
            <person name="Frith M.C."/>
            <person name="Maeda N."/>
            <person name="Oyama R."/>
            <person name="Ravasi T."/>
            <person name="Lenhard B."/>
            <person name="Wells C."/>
            <person name="Kodzius R."/>
            <person name="Shimokawa K."/>
            <person name="Bajic V.B."/>
            <person name="Brenner S.E."/>
            <person name="Batalov S."/>
            <person name="Forrest A.R."/>
            <person name="Zavolan M."/>
            <person name="Davis M.J."/>
            <person name="Wilming L.G."/>
            <person name="Aidinis V."/>
            <person name="Allen J.E."/>
            <person name="Ambesi-Impiombato A."/>
            <person name="Apweiler R."/>
            <person name="Aturaliya R.N."/>
            <person name="Bailey T.L."/>
            <person name="Bansal M."/>
            <person name="Baxter L."/>
            <person name="Beisel K.W."/>
            <person name="Bersano T."/>
            <person name="Bono H."/>
            <person name="Chalk A.M."/>
            <person name="Chiu K.P."/>
            <person name="Choudhary V."/>
            <person name="Christoffels A."/>
            <person name="Clutterbuck D.R."/>
            <person name="Crowe M.L."/>
            <person name="Dalla E."/>
            <person name="Dalrymple B.P."/>
            <person name="de Bono B."/>
            <person name="Della Gatta G."/>
            <person name="di Bernardo D."/>
            <person name="Down T."/>
            <person name="Engstrom P."/>
            <person name="Fagiolini M."/>
            <person name="Faulkner G."/>
            <person name="Fletcher C.F."/>
            <person name="Fukushima T."/>
            <person name="Furuno M."/>
            <person name="Futaki S."/>
            <person name="Gariboldi M."/>
            <person name="Georgii-Hemming P."/>
            <person name="Gingeras T.R."/>
            <person name="Gojobori T."/>
            <person name="Green R.E."/>
            <person name="Gustincich S."/>
            <person name="Harbers M."/>
            <person name="Hayashi Y."/>
            <person name="Hensch T.K."/>
            <person name="Hirokawa N."/>
            <person name="Hill D."/>
            <person name="Huminiecki L."/>
            <person name="Iacono M."/>
            <person name="Ikeo K."/>
            <person name="Iwama A."/>
            <person name="Ishikawa T."/>
            <person name="Jakt M."/>
            <person name="Kanapin A."/>
            <person name="Katoh M."/>
            <person name="Kawasawa Y."/>
            <person name="Kelso J."/>
            <person name="Kitamura H."/>
            <person name="Kitano H."/>
            <person name="Kollias G."/>
            <person name="Krishnan S.P."/>
            <person name="Kruger A."/>
            <person name="Kummerfeld S.K."/>
            <person name="Kurochkin I.V."/>
            <person name="Lareau L.F."/>
            <person name="Lazarevic D."/>
            <person name="Lipovich L."/>
            <person name="Liu J."/>
            <person name="Liuni S."/>
            <person name="McWilliam S."/>
            <person name="Madan Babu M."/>
            <person name="Madera M."/>
            <person name="Marchionni L."/>
            <person name="Matsuda H."/>
            <person name="Matsuzawa S."/>
            <person name="Miki H."/>
            <person name="Mignone F."/>
            <person name="Miyake S."/>
            <person name="Morris K."/>
            <person name="Mottagui-Tabar S."/>
            <person name="Mulder N."/>
            <person name="Nakano N."/>
            <person name="Nakauchi H."/>
            <person name="Ng P."/>
            <person name="Nilsson R."/>
            <person name="Nishiguchi S."/>
            <person name="Nishikawa S."/>
            <person name="Nori F."/>
            <person name="Ohara O."/>
            <person name="Okazaki Y."/>
            <person name="Orlando V."/>
            <person name="Pang K.C."/>
            <person name="Pavan W.J."/>
            <person name="Pavesi G."/>
            <person name="Pesole G."/>
            <person name="Petrovsky N."/>
            <person name="Piazza S."/>
            <person name="Reed J."/>
            <person name="Reid J.F."/>
            <person name="Ring B.Z."/>
            <person name="Ringwald M."/>
            <person name="Rost B."/>
            <person name="Ruan Y."/>
            <person name="Salzberg S.L."/>
            <person name="Sandelin A."/>
            <person name="Schneider C."/>
            <person name="Schoenbach C."/>
            <person name="Sekiguchi K."/>
            <person name="Semple C.A."/>
            <person name="Seno S."/>
            <person name="Sessa L."/>
            <person name="Sheng Y."/>
            <person name="Shibata Y."/>
            <person name="Shimada H."/>
            <person name="Shimada K."/>
            <person name="Silva D."/>
            <person name="Sinclair B."/>
            <person name="Sperling S."/>
            <person name="Stupka E."/>
            <person name="Sugiura K."/>
            <person name="Sultana R."/>
            <person name="Takenaka Y."/>
            <person name="Taki K."/>
            <person name="Tammoja K."/>
            <person name="Tan S.L."/>
            <person name="Tang S."/>
            <person name="Taylor M.S."/>
            <person name="Tegner J."/>
            <person name="Teichmann S.A."/>
            <person name="Ueda H.R."/>
            <person name="van Nimwegen E."/>
            <person name="Verardo R."/>
            <person name="Wei C.L."/>
            <person name="Yagi K."/>
            <person name="Yamanishi H."/>
            <person name="Zabarovsky E."/>
            <person name="Zhu S."/>
            <person name="Zimmer A."/>
            <person name="Hide W."/>
            <person name="Bult C."/>
            <person name="Grimmond S.M."/>
            <person name="Teasdale R.D."/>
            <person name="Liu E.T."/>
            <person name="Brusic V."/>
            <person name="Quackenbush J."/>
            <person name="Wahlestedt C."/>
            <person name="Mattick J.S."/>
            <person name="Hume D.A."/>
            <person name="Kai C."/>
            <person name="Sasaki D."/>
            <person name="Tomaru Y."/>
            <person name="Fukuda S."/>
            <person name="Kanamori-Katayama M."/>
            <person name="Suzuki M."/>
            <person name="Aoki J."/>
            <person name="Arakawa T."/>
            <person name="Iida J."/>
            <person name="Imamura K."/>
            <person name="Itoh M."/>
            <person name="Kato T."/>
            <person name="Kawaji H."/>
            <person name="Kawagashira N."/>
            <person name="Kawashima T."/>
            <person name="Kojima M."/>
            <person name="Kondo S."/>
            <person name="Konno H."/>
            <person name="Nakano K."/>
            <person name="Ninomiya N."/>
            <person name="Nishio T."/>
            <person name="Okada M."/>
            <person name="Plessy C."/>
            <person name="Shibata K."/>
            <person name="Shiraki T."/>
            <person name="Suzuki S."/>
            <person name="Tagami M."/>
            <person name="Waki K."/>
            <person name="Watahiki A."/>
            <person name="Okamura-Oho Y."/>
            <person name="Suzuki H."/>
            <person name="Kawai J."/>
            <person name="Hayashizaki Y."/>
        </authorList>
    </citation>
    <scope>NUCLEOTIDE SEQUENCE [LARGE SCALE MRNA]</scope>
    <source>
        <strain>C57BL/6J</strain>
        <tissue>Kidney</tissue>
    </source>
</reference>
<reference key="3">
    <citation type="journal article" date="2004" name="Genome Res.">
        <title>The status, quality, and expansion of the NIH full-length cDNA project: the Mammalian Gene Collection (MGC).</title>
        <authorList>
            <consortium name="The MGC Project Team"/>
        </authorList>
    </citation>
    <scope>NUCLEOTIDE SEQUENCE [LARGE SCALE MRNA]</scope>
    <source>
        <strain>FVB/N</strain>
        <tissue>Mammary tumor</tissue>
    </source>
</reference>
<proteinExistence type="evidence at transcript level"/>
<comment type="function">
    <text evidence="1 4">E3 ubiquitin-protein ligase which may specifically enhance the E2 activity of HIP2. E3 ubiquitin ligases accept ubiquitin from an E2 ubiquitin-conjugating enzyme in the form of a thioester and then directly transfer the ubiquitin to targeted substrates (By similarity). May be involved in T-cell proliferation by regulating LIF secretion (By similarity). May play a role in lysosome homeostasis. Promotes 'Lys-6', 'Lys-11' and 'Lys-63'-linked mixed polyubiquitination on ATG14 leading to the inhibition of autophagy by impairing the interaction between ATG14 and STX7. Participates in the dopamine-mediated negative regulation of the NLRP3 inflammasome by promoting its uibiquitination and subsequent degradation (By similarity).</text>
</comment>
<comment type="catalytic activity">
    <reaction evidence="1">
        <text>S-ubiquitinyl-[E2 ubiquitin-conjugating enzyme]-L-cysteine + [acceptor protein]-L-lysine = [E2 ubiquitin-conjugating enzyme]-L-cysteine + N(6)-ubiquitinyl-[acceptor protein]-L-lysine.</text>
        <dbReference type="EC" id="2.3.2.27"/>
    </reaction>
</comment>
<comment type="pathway">
    <text>Protein modification; protein ubiquitination.</text>
</comment>
<comment type="subcellular location">
    <subcellularLocation>
        <location evidence="1">Cytoplasm</location>
    </subcellularLocation>
</comment>
<comment type="tissue specificity">
    <text evidence="4">Expressed in brain, thymus, muscle and kidney.</text>
</comment>
<comment type="developmental stage">
    <text evidence="4">Highly expressed in most tissues up to 15.5 dpc. Thereafter, expressed at highest levels in the nervous system.</text>
</comment>
<comment type="domain">
    <text evidence="2">The RING-CH-type zinc finger domain is required for E3 ligase activity.</text>
</comment>
<comment type="disruption phenotype">
    <text evidence="4">Mice have defects in formation of corpus callosum and show degeneration of substantia gelatinosa lamina II axons in adulthood. They have normal lymphoid development but show hyperproliferation of T-cells in response to mitogens.</text>
</comment>
<sequence>MESKPSRIPRRISVQPSGSLSTRMVSGNRGTSLNDSYHSRDSSFRLDSEYQSASASACASPCQPAWYSESEIPQGARARAQTQQRDHDSKRPKLSCTNCASTSAGRNGGSGLNTVSDSSWRHSQVPRSSSMVLGSFGTDLMRERRDLDRRRESSISNLMDYNHRSGDFTTSSYVQERVPSSYSQGARPKENAVSTLQLNSSSTNHQLPSDHQTVPSSRDSSRSSFRSHFSPRQSESFRNSSHPAFSYFSSRNETPTISNSERGSSQRPYRESSDNEGRRTTRRLLSRIASSMSSTFFSRRSSQDSLNTRSLSSENYISPRTLTSQSRNNGTSSSSDVSEGRAAEASQGFRFLRRRWGLSSLSQNHSSEPEAENFNQESEGRNSGPWLSSSLRNRCTPLFSRRRREGRDESSRMSTSDVPPRSHIFRRDSNEVVHLEAQGDSLGAAANRPQASGASSSAAAGGSTPELPQGGRNPGLTGILPGSLFRFAVPPALGSNLADNVMITVDIIPSGWNSTDGKNDKAKSAPSRDPEKLQKIKESLLLEDSDDEEEGDLCRICQMAAASSSNLLIEPCKCTGSLQYVHQECMKKWLQAKINSGSSLEAVTTCELCKEKLQLNLEDFDIHELHRAHANEQAEYEFISSGLYLVVLLHLCEQSFSDMMGNTIEPSTRVRFINLARTLQAHMEDLETSEDEF</sequence>
<name>MARH7_MOUSE</name>
<organism>
    <name type="scientific">Mus musculus</name>
    <name type="common">Mouse</name>
    <dbReference type="NCBI Taxonomy" id="10090"/>
    <lineage>
        <taxon>Eukaryota</taxon>
        <taxon>Metazoa</taxon>
        <taxon>Chordata</taxon>
        <taxon>Craniata</taxon>
        <taxon>Vertebrata</taxon>
        <taxon>Euteleostomi</taxon>
        <taxon>Mammalia</taxon>
        <taxon>Eutheria</taxon>
        <taxon>Euarchontoglires</taxon>
        <taxon>Glires</taxon>
        <taxon>Rodentia</taxon>
        <taxon>Myomorpha</taxon>
        <taxon>Muroidea</taxon>
        <taxon>Muridae</taxon>
        <taxon>Murinae</taxon>
        <taxon>Mus</taxon>
        <taxon>Mus</taxon>
    </lineage>
</organism>
<keyword id="KW-0007">Acetylation</keyword>
<keyword id="KW-0963">Cytoplasm</keyword>
<keyword id="KW-0479">Metal-binding</keyword>
<keyword id="KW-0597">Phosphoprotein</keyword>
<keyword id="KW-1185">Reference proteome</keyword>
<keyword id="KW-0808">Transferase</keyword>
<keyword id="KW-0833">Ubl conjugation pathway</keyword>
<keyword id="KW-0862">Zinc</keyword>
<keyword id="KW-0863">Zinc-finger</keyword>
<dbReference type="EC" id="2.3.2.27"/>
<dbReference type="EMBL" id="AF155739">
    <property type="protein sequence ID" value="AAD38411.1"/>
    <property type="molecule type" value="mRNA"/>
</dbReference>
<dbReference type="EMBL" id="AK166666">
    <property type="protein sequence ID" value="BAE38928.1"/>
    <property type="molecule type" value="mRNA"/>
</dbReference>
<dbReference type="EMBL" id="AK167246">
    <property type="protein sequence ID" value="BAE39367.1"/>
    <property type="molecule type" value="mRNA"/>
</dbReference>
<dbReference type="EMBL" id="AK168555">
    <property type="protein sequence ID" value="BAE40429.1"/>
    <property type="molecule type" value="mRNA"/>
</dbReference>
<dbReference type="EMBL" id="BC025029">
    <property type="protein sequence ID" value="AAH25029.1"/>
    <property type="molecule type" value="mRNA"/>
</dbReference>
<dbReference type="CCDS" id="CCDS16057.1"/>
<dbReference type="RefSeq" id="NP_001405418.1">
    <property type="nucleotide sequence ID" value="NM_001418489.1"/>
</dbReference>
<dbReference type="RefSeq" id="NP_065600.1">
    <property type="nucleotide sequence ID" value="NM_020575.3"/>
</dbReference>
<dbReference type="SMR" id="Q9WV66"/>
<dbReference type="BioGRID" id="208295">
    <property type="interactions" value="1"/>
</dbReference>
<dbReference type="FunCoup" id="Q9WV66">
    <property type="interactions" value="4510"/>
</dbReference>
<dbReference type="STRING" id="10090.ENSMUSP00000099809"/>
<dbReference type="iPTMnet" id="Q9WV66"/>
<dbReference type="PhosphoSitePlus" id="Q9WV66"/>
<dbReference type="PaxDb" id="10090-ENSMUSP00000099809"/>
<dbReference type="PeptideAtlas" id="Q9WV66"/>
<dbReference type="ProteomicsDB" id="295828"/>
<dbReference type="Pumba" id="Q9WV66"/>
<dbReference type="Antibodypedia" id="33721">
    <property type="antibodies" value="255 antibodies from 28 providers"/>
</dbReference>
<dbReference type="DNASU" id="57438"/>
<dbReference type="Ensembl" id="ENSMUST00000067542.15">
    <property type="protein sequence ID" value="ENSMUSP00000068961.9"/>
    <property type="gene ID" value="ENSMUSG00000026977.18"/>
</dbReference>
<dbReference type="Ensembl" id="ENSMUST00000102747.8">
    <property type="protein sequence ID" value="ENSMUSP00000099808.2"/>
    <property type="gene ID" value="ENSMUSG00000026977.18"/>
</dbReference>
<dbReference type="Ensembl" id="ENSMUST00000102748.11">
    <property type="protein sequence ID" value="ENSMUSP00000099809.5"/>
    <property type="gene ID" value="ENSMUSG00000026977.18"/>
</dbReference>
<dbReference type="GeneID" id="57438"/>
<dbReference type="KEGG" id="mmu:57438"/>
<dbReference type="UCSC" id="uc008jtx.1">
    <property type="organism name" value="mouse"/>
</dbReference>
<dbReference type="AGR" id="MGI:1931053"/>
<dbReference type="CTD" id="64844"/>
<dbReference type="MGI" id="MGI:1931053">
    <property type="gene designation" value="Marchf7"/>
</dbReference>
<dbReference type="VEuPathDB" id="HostDB:ENSMUSG00000026977"/>
<dbReference type="eggNOG" id="KOG1609">
    <property type="taxonomic scope" value="Eukaryota"/>
</dbReference>
<dbReference type="GeneTree" id="ENSGT00530000063836"/>
<dbReference type="HOGENOM" id="CLU_019830_0_0_1"/>
<dbReference type="InParanoid" id="Q9WV66"/>
<dbReference type="OMA" id="RMMSGNR"/>
<dbReference type="OrthoDB" id="2154780at2759"/>
<dbReference type="PhylomeDB" id="Q9WV66"/>
<dbReference type="TreeFam" id="TF330816"/>
<dbReference type="UniPathway" id="UPA00143"/>
<dbReference type="BioGRID-ORCS" id="57438">
    <property type="hits" value="1 hit in 43 CRISPR screens"/>
</dbReference>
<dbReference type="ChiTaRS" id="March7">
    <property type="organism name" value="mouse"/>
</dbReference>
<dbReference type="PRO" id="PR:Q9WV66"/>
<dbReference type="Proteomes" id="UP000000589">
    <property type="component" value="Chromosome 2"/>
</dbReference>
<dbReference type="RNAct" id="Q9WV66">
    <property type="molecule type" value="protein"/>
</dbReference>
<dbReference type="Bgee" id="ENSMUSG00000026977">
    <property type="expression patterns" value="Expressed in pharyngeal arch 2 and 256 other cell types or tissues"/>
</dbReference>
<dbReference type="ExpressionAtlas" id="Q9WV66">
    <property type="expression patterns" value="baseline and differential"/>
</dbReference>
<dbReference type="GO" id="GO:0005813">
    <property type="term" value="C:centrosome"/>
    <property type="evidence" value="ECO:0007669"/>
    <property type="project" value="Ensembl"/>
</dbReference>
<dbReference type="GO" id="GO:0036064">
    <property type="term" value="C:ciliary basal body"/>
    <property type="evidence" value="ECO:0007669"/>
    <property type="project" value="Ensembl"/>
</dbReference>
<dbReference type="GO" id="GO:0005829">
    <property type="term" value="C:cytosol"/>
    <property type="evidence" value="ECO:0000314"/>
    <property type="project" value="UniProtKB"/>
</dbReference>
<dbReference type="GO" id="GO:0005634">
    <property type="term" value="C:nucleus"/>
    <property type="evidence" value="ECO:0000314"/>
    <property type="project" value="UniProtKB"/>
</dbReference>
<dbReference type="GO" id="GO:0005886">
    <property type="term" value="C:plasma membrane"/>
    <property type="evidence" value="ECO:0000314"/>
    <property type="project" value="UniProtKB"/>
</dbReference>
<dbReference type="GO" id="GO:0019899">
    <property type="term" value="F:enzyme binding"/>
    <property type="evidence" value="ECO:0000353"/>
    <property type="project" value="UniProtKB"/>
</dbReference>
<dbReference type="GO" id="GO:0097371">
    <property type="term" value="F:MDM2/MDM4 family protein binding"/>
    <property type="evidence" value="ECO:0007669"/>
    <property type="project" value="Ensembl"/>
</dbReference>
<dbReference type="GO" id="GO:0043130">
    <property type="term" value="F:ubiquitin binding"/>
    <property type="evidence" value="ECO:0000315"/>
    <property type="project" value="UniProtKB"/>
</dbReference>
<dbReference type="GO" id="GO:0031624">
    <property type="term" value="F:ubiquitin conjugating enzyme binding"/>
    <property type="evidence" value="ECO:0007669"/>
    <property type="project" value="Ensembl"/>
</dbReference>
<dbReference type="GO" id="GO:0061630">
    <property type="term" value="F:ubiquitin protein ligase activity"/>
    <property type="evidence" value="ECO:0007669"/>
    <property type="project" value="Ensembl"/>
</dbReference>
<dbReference type="GO" id="GO:0008270">
    <property type="term" value="F:zinc ion binding"/>
    <property type="evidence" value="ECO:0007669"/>
    <property type="project" value="UniProtKB-KW"/>
</dbReference>
<dbReference type="GO" id="GO:1902018">
    <property type="term" value="P:negative regulation of cilium assembly"/>
    <property type="evidence" value="ECO:0007669"/>
    <property type="project" value="Ensembl"/>
</dbReference>
<dbReference type="GO" id="GO:0043518">
    <property type="term" value="P:negative regulation of DNA damage response, signal transduction by p53 class mediator"/>
    <property type="evidence" value="ECO:0000250"/>
    <property type="project" value="UniProtKB"/>
</dbReference>
<dbReference type="GO" id="GO:1902166">
    <property type="term" value="P:negative regulation of intrinsic apoptotic signaling pathway in response to DNA damage by p53 class mediator"/>
    <property type="evidence" value="ECO:0000250"/>
    <property type="project" value="UniProtKB"/>
</dbReference>
<dbReference type="GO" id="GO:1901799">
    <property type="term" value="P:negative regulation of proteasomal protein catabolic process"/>
    <property type="evidence" value="ECO:0000250"/>
    <property type="project" value="UniProtKB"/>
</dbReference>
<dbReference type="GO" id="GO:1905524">
    <property type="term" value="P:negative regulation of protein autoubiquitination"/>
    <property type="evidence" value="ECO:0000250"/>
    <property type="project" value="UniProtKB"/>
</dbReference>
<dbReference type="GO" id="GO:0042130">
    <property type="term" value="P:negative regulation of T cell proliferation"/>
    <property type="evidence" value="ECO:0000315"/>
    <property type="project" value="MGI"/>
</dbReference>
<dbReference type="GO" id="GO:0008284">
    <property type="term" value="P:positive regulation of cell population proliferation"/>
    <property type="evidence" value="ECO:0000250"/>
    <property type="project" value="UniProtKB"/>
</dbReference>
<dbReference type="GO" id="GO:1902916">
    <property type="term" value="P:positive regulation of protein polyubiquitination"/>
    <property type="evidence" value="ECO:0000250"/>
    <property type="project" value="UniProtKB"/>
</dbReference>
<dbReference type="GO" id="GO:0051865">
    <property type="term" value="P:protein autoubiquitination"/>
    <property type="evidence" value="ECO:0000315"/>
    <property type="project" value="UniProtKB"/>
</dbReference>
<dbReference type="GO" id="GO:0006513">
    <property type="term" value="P:protein monoubiquitination"/>
    <property type="evidence" value="ECO:0007669"/>
    <property type="project" value="Ensembl"/>
</dbReference>
<dbReference type="GO" id="GO:0050821">
    <property type="term" value="P:protein stabilization"/>
    <property type="evidence" value="ECO:0000250"/>
    <property type="project" value="UniProtKB"/>
</dbReference>
<dbReference type="GO" id="GO:0002643">
    <property type="term" value="P:regulation of tolerance induction"/>
    <property type="evidence" value="ECO:0000315"/>
    <property type="project" value="MGI"/>
</dbReference>
<dbReference type="CDD" id="cd16812">
    <property type="entry name" value="RING_CH-C4HC3_MARCH7"/>
    <property type="match status" value="1"/>
</dbReference>
<dbReference type="Gene3D" id="3.30.40.10">
    <property type="entry name" value="Zinc/RING finger domain, C3HC4 (zinc finger)"/>
    <property type="match status" value="1"/>
</dbReference>
<dbReference type="InterPro" id="IPR052297">
    <property type="entry name" value="RING-CH-type_E3_ubiq-ligase"/>
</dbReference>
<dbReference type="InterPro" id="IPR011016">
    <property type="entry name" value="Znf_RING-CH"/>
</dbReference>
<dbReference type="InterPro" id="IPR013083">
    <property type="entry name" value="Znf_RING/FYVE/PHD"/>
</dbReference>
<dbReference type="PANTHER" id="PTHR14471:SF1">
    <property type="entry name" value="E3 UBIQUITIN-PROTEIN LIGASE MARCHF7"/>
    <property type="match status" value="1"/>
</dbReference>
<dbReference type="PANTHER" id="PTHR14471">
    <property type="entry name" value="MARCH7/10 E3 UBIQUITIN PROTEIN LIGASE FAMILY MEMBER"/>
    <property type="match status" value="1"/>
</dbReference>
<dbReference type="Pfam" id="PF12906">
    <property type="entry name" value="RINGv"/>
    <property type="match status" value="1"/>
</dbReference>
<dbReference type="SMART" id="SM00744">
    <property type="entry name" value="RINGv"/>
    <property type="match status" value="1"/>
</dbReference>
<dbReference type="SUPFAM" id="SSF57850">
    <property type="entry name" value="RING/U-box"/>
    <property type="match status" value="1"/>
</dbReference>
<dbReference type="PROSITE" id="PS51292">
    <property type="entry name" value="ZF_RING_CH"/>
    <property type="match status" value="1"/>
</dbReference>